<organism>
    <name type="scientific">Homo sapiens</name>
    <name type="common">Human</name>
    <dbReference type="NCBI Taxonomy" id="9606"/>
    <lineage>
        <taxon>Eukaryota</taxon>
        <taxon>Metazoa</taxon>
        <taxon>Chordata</taxon>
        <taxon>Craniata</taxon>
        <taxon>Vertebrata</taxon>
        <taxon>Euteleostomi</taxon>
        <taxon>Mammalia</taxon>
        <taxon>Eutheria</taxon>
        <taxon>Euarchontoglires</taxon>
        <taxon>Primates</taxon>
        <taxon>Haplorrhini</taxon>
        <taxon>Catarrhini</taxon>
        <taxon>Hominidae</taxon>
        <taxon>Homo</taxon>
    </lineage>
</organism>
<comment type="caution">
    <text evidence="2">Product of a dubious CDS prediction. May be a non-coding RNA.</text>
</comment>
<keyword id="KW-1185">Reference proteome</keyword>
<accession>Q8NAA6</accession>
<name>CO053_HUMAN</name>
<protein>
    <recommendedName>
        <fullName>Putative uncharacterized protein encoded by LINC02694</fullName>
    </recommendedName>
</protein>
<reference key="1">
    <citation type="journal article" date="2004" name="Nat. Genet.">
        <title>Complete sequencing and characterization of 21,243 full-length human cDNAs.</title>
        <authorList>
            <person name="Ota T."/>
            <person name="Suzuki Y."/>
            <person name="Nishikawa T."/>
            <person name="Otsuki T."/>
            <person name="Sugiyama T."/>
            <person name="Irie R."/>
            <person name="Wakamatsu A."/>
            <person name="Hayashi K."/>
            <person name="Sato H."/>
            <person name="Nagai K."/>
            <person name="Kimura K."/>
            <person name="Makita H."/>
            <person name="Sekine M."/>
            <person name="Obayashi M."/>
            <person name="Nishi T."/>
            <person name="Shibahara T."/>
            <person name="Tanaka T."/>
            <person name="Ishii S."/>
            <person name="Yamamoto J."/>
            <person name="Saito K."/>
            <person name="Kawai Y."/>
            <person name="Isono Y."/>
            <person name="Nakamura Y."/>
            <person name="Nagahari K."/>
            <person name="Murakami K."/>
            <person name="Yasuda T."/>
            <person name="Iwayanagi T."/>
            <person name="Wagatsuma M."/>
            <person name="Shiratori A."/>
            <person name="Sudo H."/>
            <person name="Hosoiri T."/>
            <person name="Kaku Y."/>
            <person name="Kodaira H."/>
            <person name="Kondo H."/>
            <person name="Sugawara M."/>
            <person name="Takahashi M."/>
            <person name="Kanda K."/>
            <person name="Yokoi T."/>
            <person name="Furuya T."/>
            <person name="Kikkawa E."/>
            <person name="Omura Y."/>
            <person name="Abe K."/>
            <person name="Kamihara K."/>
            <person name="Katsuta N."/>
            <person name="Sato K."/>
            <person name="Tanikawa M."/>
            <person name="Yamazaki M."/>
            <person name="Ninomiya K."/>
            <person name="Ishibashi T."/>
            <person name="Yamashita H."/>
            <person name="Murakawa K."/>
            <person name="Fujimori K."/>
            <person name="Tanai H."/>
            <person name="Kimata M."/>
            <person name="Watanabe M."/>
            <person name="Hiraoka S."/>
            <person name="Chiba Y."/>
            <person name="Ishida S."/>
            <person name="Ono Y."/>
            <person name="Takiguchi S."/>
            <person name="Watanabe S."/>
            <person name="Yosida M."/>
            <person name="Hotuta T."/>
            <person name="Kusano J."/>
            <person name="Kanehori K."/>
            <person name="Takahashi-Fujii A."/>
            <person name="Hara H."/>
            <person name="Tanase T.-O."/>
            <person name="Nomura Y."/>
            <person name="Togiya S."/>
            <person name="Komai F."/>
            <person name="Hara R."/>
            <person name="Takeuchi K."/>
            <person name="Arita M."/>
            <person name="Imose N."/>
            <person name="Musashino K."/>
            <person name="Yuuki H."/>
            <person name="Oshima A."/>
            <person name="Sasaki N."/>
            <person name="Aotsuka S."/>
            <person name="Yoshikawa Y."/>
            <person name="Matsunawa H."/>
            <person name="Ichihara T."/>
            <person name="Shiohata N."/>
            <person name="Sano S."/>
            <person name="Moriya S."/>
            <person name="Momiyama H."/>
            <person name="Satoh N."/>
            <person name="Takami S."/>
            <person name="Terashima Y."/>
            <person name="Suzuki O."/>
            <person name="Nakagawa S."/>
            <person name="Senoh A."/>
            <person name="Mizoguchi H."/>
            <person name="Goto Y."/>
            <person name="Shimizu F."/>
            <person name="Wakebe H."/>
            <person name="Hishigaki H."/>
            <person name="Watanabe T."/>
            <person name="Sugiyama A."/>
            <person name="Takemoto M."/>
            <person name="Kawakami B."/>
            <person name="Yamazaki M."/>
            <person name="Watanabe K."/>
            <person name="Kumagai A."/>
            <person name="Itakura S."/>
            <person name="Fukuzumi Y."/>
            <person name="Fujimori Y."/>
            <person name="Komiyama M."/>
            <person name="Tashiro H."/>
            <person name="Tanigami A."/>
            <person name="Fujiwara T."/>
            <person name="Ono T."/>
            <person name="Yamada K."/>
            <person name="Fujii Y."/>
            <person name="Ozaki K."/>
            <person name="Hirao M."/>
            <person name="Ohmori Y."/>
            <person name="Kawabata A."/>
            <person name="Hikiji T."/>
            <person name="Kobatake N."/>
            <person name="Inagaki H."/>
            <person name="Ikema Y."/>
            <person name="Okamoto S."/>
            <person name="Okitani R."/>
            <person name="Kawakami T."/>
            <person name="Noguchi S."/>
            <person name="Itoh T."/>
            <person name="Shigeta K."/>
            <person name="Senba T."/>
            <person name="Matsumura K."/>
            <person name="Nakajima Y."/>
            <person name="Mizuno T."/>
            <person name="Morinaga M."/>
            <person name="Sasaki M."/>
            <person name="Togashi T."/>
            <person name="Oyama M."/>
            <person name="Hata H."/>
            <person name="Watanabe M."/>
            <person name="Komatsu T."/>
            <person name="Mizushima-Sugano J."/>
            <person name="Satoh T."/>
            <person name="Shirai Y."/>
            <person name="Takahashi Y."/>
            <person name="Nakagawa K."/>
            <person name="Okumura K."/>
            <person name="Nagase T."/>
            <person name="Nomura N."/>
            <person name="Kikuchi H."/>
            <person name="Masuho Y."/>
            <person name="Yamashita R."/>
            <person name="Nakai K."/>
            <person name="Yada T."/>
            <person name="Nakamura Y."/>
            <person name="Ohara O."/>
            <person name="Isogai T."/>
            <person name="Sugano S."/>
        </authorList>
    </citation>
    <scope>NUCLEOTIDE SEQUENCE [LARGE SCALE MRNA]</scope>
    <source>
        <tissue>Spleen</tissue>
    </source>
</reference>
<reference key="2">
    <citation type="journal article" date="2006" name="Nature">
        <title>Analysis of the DNA sequence and duplication history of human chromosome 15.</title>
        <authorList>
            <person name="Zody M.C."/>
            <person name="Garber M."/>
            <person name="Sharpe T."/>
            <person name="Young S.K."/>
            <person name="Rowen L."/>
            <person name="O'Neill K."/>
            <person name="Whittaker C.A."/>
            <person name="Kamal M."/>
            <person name="Chang J.L."/>
            <person name="Cuomo C.A."/>
            <person name="Dewar K."/>
            <person name="FitzGerald M.G."/>
            <person name="Kodira C.D."/>
            <person name="Madan A."/>
            <person name="Qin S."/>
            <person name="Yang X."/>
            <person name="Abbasi N."/>
            <person name="Abouelleil A."/>
            <person name="Arachchi H.M."/>
            <person name="Baradarani L."/>
            <person name="Birditt B."/>
            <person name="Bloom S."/>
            <person name="Bloom T."/>
            <person name="Borowsky M.L."/>
            <person name="Burke J."/>
            <person name="Butler J."/>
            <person name="Cook A."/>
            <person name="DeArellano K."/>
            <person name="DeCaprio D."/>
            <person name="Dorris L. III"/>
            <person name="Dors M."/>
            <person name="Eichler E.E."/>
            <person name="Engels R."/>
            <person name="Fahey J."/>
            <person name="Fleetwood P."/>
            <person name="Friedman C."/>
            <person name="Gearin G."/>
            <person name="Hall J.L."/>
            <person name="Hensley G."/>
            <person name="Johnson E."/>
            <person name="Jones C."/>
            <person name="Kamat A."/>
            <person name="Kaur A."/>
            <person name="Locke D.P."/>
            <person name="Madan A."/>
            <person name="Munson G."/>
            <person name="Jaffe D.B."/>
            <person name="Lui A."/>
            <person name="Macdonald P."/>
            <person name="Mauceli E."/>
            <person name="Naylor J.W."/>
            <person name="Nesbitt R."/>
            <person name="Nicol R."/>
            <person name="O'Leary S.B."/>
            <person name="Ratcliffe A."/>
            <person name="Rounsley S."/>
            <person name="She X."/>
            <person name="Sneddon K.M.B."/>
            <person name="Stewart S."/>
            <person name="Sougnez C."/>
            <person name="Stone S.M."/>
            <person name="Topham K."/>
            <person name="Vincent D."/>
            <person name="Wang S."/>
            <person name="Zimmer A.R."/>
            <person name="Birren B.W."/>
            <person name="Hood L."/>
            <person name="Lander E.S."/>
            <person name="Nusbaum C."/>
        </authorList>
    </citation>
    <scope>NUCLEOTIDE SEQUENCE [LARGE SCALE GENOMIC DNA]</scope>
</reference>
<reference key="3">
    <citation type="journal article" date="2004" name="Genome Res.">
        <title>The status, quality, and expansion of the NIH full-length cDNA project: the Mammalian Gene Collection (MGC).</title>
        <authorList>
            <consortium name="The MGC Project Team"/>
        </authorList>
    </citation>
    <scope>NUCLEOTIDE SEQUENCE [LARGE SCALE MRNA]</scope>
</reference>
<sequence length="179" mass="19737">MELQGAQEDLGISLSSPRRNHETRPGSKAKGRSSICLQASVWMAGGKLRLRASEHLTQGHQQELRDWNLGEDASLLFSKSPFGAGKLIQAPAHVFRQCWVQGNAWISCITKFDSKRSPEVASSPSYLTVPRRSPLPVFLRPSDRCVCGGCYLGKSTRRRACQSLLSDPLGVTFPTQTRP</sequence>
<evidence type="ECO:0000256" key="1">
    <source>
        <dbReference type="SAM" id="MobiDB-lite"/>
    </source>
</evidence>
<evidence type="ECO:0000305" key="2"/>
<proteinExistence type="uncertain"/>
<dbReference type="EMBL" id="AK093014">
    <property type="protein sequence ID" value="BAC04019.1"/>
    <property type="molecule type" value="mRNA"/>
</dbReference>
<dbReference type="EMBL" id="AC104261">
    <property type="status" value="NOT_ANNOTATED_CDS"/>
    <property type="molecule type" value="Genomic_DNA"/>
</dbReference>
<dbReference type="EMBL" id="BC119016">
    <property type="protein sequence ID" value="AAI19017.1"/>
    <property type="molecule type" value="mRNA"/>
</dbReference>
<dbReference type="EMBL" id="BC119810">
    <property type="protein sequence ID" value="AAI19811.1"/>
    <property type="molecule type" value="mRNA"/>
</dbReference>
<dbReference type="RefSeq" id="NP_997327.1">
    <property type="nucleotide sequence ID" value="NM_207444.2"/>
</dbReference>
<dbReference type="BioGRID" id="134577">
    <property type="interactions" value="6"/>
</dbReference>
<dbReference type="IntAct" id="Q8NAA6">
    <property type="interactions" value="5"/>
</dbReference>
<dbReference type="GlyGen" id="Q8NAA6">
    <property type="glycosylation" value="1 site, 1 O-linked glycan (1 site)"/>
</dbReference>
<dbReference type="iPTMnet" id="Q8NAA6"/>
<dbReference type="PhosphoSitePlus" id="Q8NAA6"/>
<dbReference type="BioMuta" id="C15orf53"/>
<dbReference type="PaxDb" id="9606-ENSP00000325144"/>
<dbReference type="PeptideAtlas" id="Q8NAA6"/>
<dbReference type="UCSC" id="uc001zkf.1">
    <property type="organism name" value="human"/>
</dbReference>
<dbReference type="AGR" id="HGNC:33796"/>
<dbReference type="GeneCards" id="LINC02694"/>
<dbReference type="HGNC" id="HGNC:33796">
    <property type="gene designation" value="LINC02694"/>
</dbReference>
<dbReference type="neXtProt" id="NX_Q8NAA6"/>
<dbReference type="PharmGKB" id="PA162378188"/>
<dbReference type="eggNOG" id="ENOG502TEJN">
    <property type="taxonomic scope" value="Eukaryota"/>
</dbReference>
<dbReference type="HOGENOM" id="CLU_1717291_0_0_1"/>
<dbReference type="InParanoid" id="Q8NAA6"/>
<dbReference type="PAN-GO" id="Q8NAA6">
    <property type="GO annotations" value="0 GO annotations based on evolutionary models"/>
</dbReference>
<dbReference type="PhylomeDB" id="Q8NAA6"/>
<dbReference type="TreeFam" id="TF342312"/>
<dbReference type="PathwayCommons" id="Q8NAA6"/>
<dbReference type="SignaLink" id="Q8NAA6"/>
<dbReference type="BioGRID-ORCS" id="400359">
    <property type="hits" value="14 hits in 1106 CRISPR screens"/>
</dbReference>
<dbReference type="ChiTaRS" id="C15orf53">
    <property type="organism name" value="human"/>
</dbReference>
<dbReference type="GenomeRNAi" id="400359"/>
<dbReference type="Pharos" id="Q8NAA6">
    <property type="development level" value="Tdark"/>
</dbReference>
<dbReference type="Proteomes" id="UP000005640">
    <property type="component" value="Unplaced"/>
</dbReference>
<dbReference type="RNAct" id="Q8NAA6">
    <property type="molecule type" value="protein"/>
</dbReference>
<dbReference type="InterPro" id="IPR040670">
    <property type="entry name" value="DUF5556"/>
</dbReference>
<dbReference type="Pfam" id="PF17711">
    <property type="entry name" value="DUF5556"/>
    <property type="match status" value="1"/>
</dbReference>
<feature type="chain" id="PRO_0000340720" description="Putative uncharacterized protein encoded by LINC02694">
    <location>
        <begin position="1"/>
        <end position="179"/>
    </location>
</feature>
<feature type="region of interest" description="Disordered" evidence="1">
    <location>
        <begin position="1"/>
        <end position="32"/>
    </location>
</feature>
<feature type="sequence variant" id="VAR_044023" description="In dbSNP:rs7165988.">
    <original>L</original>
    <variation>V</variation>
    <location>
        <position position="3"/>
    </location>
</feature>
<feature type="sequence variant" id="VAR_044024" description="In dbSNP:rs11857596.">
    <original>A</original>
    <variation>V</variation>
    <location>
        <position position="39"/>
    </location>
</feature>
<gene>
    <name type="primary">LINC02694</name>
    <name type="synonym">C15orf53</name>
</gene>